<comment type="function">
    <text evidence="1">Redox regulated molecular chaperone. Protects both thermally unfolding and oxidatively damaged proteins from irreversible aggregation. Plays an important role in the bacterial defense system toward oxidative stress.</text>
</comment>
<comment type="subcellular location">
    <subcellularLocation>
        <location evidence="1">Cytoplasm</location>
    </subcellularLocation>
</comment>
<comment type="PTM">
    <text evidence="1">Under oxidizing conditions two disulfide bonds are formed involving the reactive cysteines. Under reducing conditions zinc is bound to the reactive cysteines and the protein is inactive.</text>
</comment>
<comment type="similarity">
    <text evidence="1">Belongs to the HSP33 family.</text>
</comment>
<dbReference type="EMBL" id="CP000951">
    <property type="protein sequence ID" value="ACA99123.1"/>
    <property type="molecule type" value="Genomic_DNA"/>
</dbReference>
<dbReference type="RefSeq" id="WP_012306746.1">
    <property type="nucleotide sequence ID" value="NZ_JAHHPU010000001.1"/>
</dbReference>
<dbReference type="SMR" id="B1XJZ5"/>
<dbReference type="STRING" id="32049.SYNPCC7002_A1123"/>
<dbReference type="KEGG" id="syp:SYNPCC7002_A1123"/>
<dbReference type="eggNOG" id="COG1281">
    <property type="taxonomic scope" value="Bacteria"/>
</dbReference>
<dbReference type="HOGENOM" id="CLU_054493_1_0_3"/>
<dbReference type="Proteomes" id="UP000001688">
    <property type="component" value="Chromosome"/>
</dbReference>
<dbReference type="GO" id="GO:0005737">
    <property type="term" value="C:cytoplasm"/>
    <property type="evidence" value="ECO:0007669"/>
    <property type="project" value="UniProtKB-SubCell"/>
</dbReference>
<dbReference type="GO" id="GO:0044183">
    <property type="term" value="F:protein folding chaperone"/>
    <property type="evidence" value="ECO:0007669"/>
    <property type="project" value="TreeGrafter"/>
</dbReference>
<dbReference type="GO" id="GO:0051082">
    <property type="term" value="F:unfolded protein binding"/>
    <property type="evidence" value="ECO:0007669"/>
    <property type="project" value="UniProtKB-UniRule"/>
</dbReference>
<dbReference type="GO" id="GO:0042026">
    <property type="term" value="P:protein refolding"/>
    <property type="evidence" value="ECO:0007669"/>
    <property type="project" value="TreeGrafter"/>
</dbReference>
<dbReference type="CDD" id="cd00498">
    <property type="entry name" value="Hsp33"/>
    <property type="match status" value="1"/>
</dbReference>
<dbReference type="Gene3D" id="3.55.30.10">
    <property type="entry name" value="Hsp33 domain"/>
    <property type="match status" value="1"/>
</dbReference>
<dbReference type="Gene3D" id="3.90.1280.10">
    <property type="entry name" value="HSP33 redox switch-like"/>
    <property type="match status" value="1"/>
</dbReference>
<dbReference type="HAMAP" id="MF_00117">
    <property type="entry name" value="HslO"/>
    <property type="match status" value="1"/>
</dbReference>
<dbReference type="InterPro" id="IPR000397">
    <property type="entry name" value="Heat_shock_Hsp33"/>
</dbReference>
<dbReference type="InterPro" id="IPR016154">
    <property type="entry name" value="Heat_shock_Hsp33_C"/>
</dbReference>
<dbReference type="InterPro" id="IPR016153">
    <property type="entry name" value="Heat_shock_Hsp33_N"/>
</dbReference>
<dbReference type="NCBIfam" id="NF001033">
    <property type="entry name" value="PRK00114.1"/>
    <property type="match status" value="1"/>
</dbReference>
<dbReference type="PANTHER" id="PTHR30111">
    <property type="entry name" value="33 KDA CHAPERONIN"/>
    <property type="match status" value="1"/>
</dbReference>
<dbReference type="PANTHER" id="PTHR30111:SF1">
    <property type="entry name" value="33 KDA CHAPERONIN"/>
    <property type="match status" value="1"/>
</dbReference>
<dbReference type="Pfam" id="PF01430">
    <property type="entry name" value="HSP33"/>
    <property type="match status" value="1"/>
</dbReference>
<dbReference type="PIRSF" id="PIRSF005261">
    <property type="entry name" value="Heat_shock_Hsp33"/>
    <property type="match status" value="1"/>
</dbReference>
<dbReference type="SUPFAM" id="SSF64397">
    <property type="entry name" value="Hsp33 domain"/>
    <property type="match status" value="1"/>
</dbReference>
<dbReference type="SUPFAM" id="SSF118352">
    <property type="entry name" value="HSP33 redox switch-like"/>
    <property type="match status" value="1"/>
</dbReference>
<keyword id="KW-0143">Chaperone</keyword>
<keyword id="KW-0963">Cytoplasm</keyword>
<keyword id="KW-1015">Disulfide bond</keyword>
<keyword id="KW-0676">Redox-active center</keyword>
<keyword id="KW-1185">Reference proteome</keyword>
<keyword id="KW-0346">Stress response</keyword>
<keyword id="KW-0862">Zinc</keyword>
<feature type="chain" id="PRO_1000095036" description="33 kDa chaperonin">
    <location>
        <begin position="1"/>
        <end position="298"/>
    </location>
</feature>
<feature type="disulfide bond" description="Redox-active" evidence="1">
    <location>
        <begin position="239"/>
        <end position="241"/>
    </location>
</feature>
<feature type="disulfide bond" description="Redox-active" evidence="1">
    <location>
        <begin position="272"/>
        <end position="275"/>
    </location>
</feature>
<accession>B1XJZ5</accession>
<name>HSLO_PICP2</name>
<protein>
    <recommendedName>
        <fullName evidence="1">33 kDa chaperonin</fullName>
    </recommendedName>
    <alternativeName>
        <fullName evidence="1">Heat shock protein 33 homolog</fullName>
        <shortName evidence="1">HSP33</shortName>
    </alternativeName>
</protein>
<gene>
    <name evidence="1" type="primary">hslO</name>
    <name type="ordered locus">SYNPCC7002_A1123</name>
</gene>
<proteinExistence type="inferred from homology"/>
<evidence type="ECO:0000255" key="1">
    <source>
        <dbReference type="HAMAP-Rule" id="MF_00117"/>
    </source>
</evidence>
<reference key="1">
    <citation type="submission" date="2008-02" db="EMBL/GenBank/DDBJ databases">
        <title>Complete sequence of Synechococcus sp. PCC 7002.</title>
        <authorList>
            <person name="Li T."/>
            <person name="Zhao J."/>
            <person name="Zhao C."/>
            <person name="Liu Z."/>
            <person name="Zhao F."/>
            <person name="Marquardt J."/>
            <person name="Nomura C.T."/>
            <person name="Persson S."/>
            <person name="Detter J.C."/>
            <person name="Richardson P.M."/>
            <person name="Lanz C."/>
            <person name="Schuster S.C."/>
            <person name="Wang J."/>
            <person name="Li S."/>
            <person name="Huang X."/>
            <person name="Cai T."/>
            <person name="Yu Z."/>
            <person name="Luo J."/>
            <person name="Zhao J."/>
            <person name="Bryant D.A."/>
        </authorList>
    </citation>
    <scope>NUCLEOTIDE SEQUENCE [LARGE SCALE GENOMIC DNA]</scope>
    <source>
        <strain>ATCC 27264 / PCC 7002 / PR-6</strain>
    </source>
</reference>
<organism>
    <name type="scientific">Picosynechococcus sp. (strain ATCC 27264 / PCC 7002 / PR-6)</name>
    <name type="common">Agmenellum quadruplicatum</name>
    <dbReference type="NCBI Taxonomy" id="32049"/>
    <lineage>
        <taxon>Bacteria</taxon>
        <taxon>Bacillati</taxon>
        <taxon>Cyanobacteriota</taxon>
        <taxon>Cyanophyceae</taxon>
        <taxon>Oscillatoriophycideae</taxon>
        <taxon>Chroococcales</taxon>
        <taxon>Geminocystaceae</taxon>
        <taxon>Picosynechococcus</taxon>
    </lineage>
</organism>
<sequence length="298" mass="31764">MADQLIRGTAADNGIRVVGVISTNLTEEARQRHKLSYVATAALGRTMASALLISSSMKKQEARLNLRIKGDGPLGGLLVDAGPDGTVRGYVQNPGVELPPNAKGKLDVGGAVGKGFLYAVKDFGRGYPYSSTVELVSGEIGDDVTHYLATSEQTPSALLVGVFVGAEGVTAAGGILLQILPKAARDESLVAKLESRLGQLSGFTPLLQQGKSLHDIFQDLLGDEDLNIFPETQMVRFDCGCTFERMMGALKMLGQDELLDMIEKDGGAEATCNFCNEVYHADVDHLSRLVEELKADAH</sequence>